<evidence type="ECO:0000256" key="1">
    <source>
        <dbReference type="SAM" id="MobiDB-lite"/>
    </source>
</evidence>
<evidence type="ECO:0000305" key="2"/>
<sequence length="55" mass="5847">GLDTVSFSTKGATYITYVNFLNELRVKTKPEGNSHGIPSLRKSSDDPGSSFVVAG</sequence>
<protein>
    <recommendedName>
        <fullName>Antiviral protein GAP-31</fullName>
        <ecNumber>3.2.2.22</ecNumber>
    </recommendedName>
    <alternativeName>
        <fullName>Ribosome-inactivating protein</fullName>
    </alternativeName>
    <alternativeName>
        <fullName>rRNA N-glycosidase</fullName>
    </alternativeName>
</protein>
<feature type="chain" id="PRO_0000221418" description="Antiviral protein GAP-31">
    <location>
        <begin position="1"/>
        <end position="55" status="greater than"/>
    </location>
</feature>
<feature type="region of interest" description="Disordered" evidence="1">
    <location>
        <begin position="29"/>
        <end position="55"/>
    </location>
</feature>
<feature type="non-terminal residue">
    <location>
        <position position="55"/>
    </location>
</feature>
<proteinExistence type="evidence at protein level"/>
<name>RIP3_SURMU</name>
<organism>
    <name type="scientific">Suregada multiflora</name>
    <name type="common">False lime</name>
    <name type="synonym">Gelonium multiflorum</name>
    <dbReference type="NCBI Taxonomy" id="3979"/>
    <lineage>
        <taxon>Eukaryota</taxon>
        <taxon>Viridiplantae</taxon>
        <taxon>Streptophyta</taxon>
        <taxon>Embryophyta</taxon>
        <taxon>Tracheophyta</taxon>
        <taxon>Spermatophyta</taxon>
        <taxon>Magnoliopsida</taxon>
        <taxon>eudicotyledons</taxon>
        <taxon>Gunneridae</taxon>
        <taxon>Pentapetalae</taxon>
        <taxon>rosids</taxon>
        <taxon>fabids</taxon>
        <taxon>Malpighiales</taxon>
        <taxon>Euphorbiaceae</taxon>
        <taxon>Crotonoideae</taxon>
        <taxon>Gelonieae</taxon>
        <taxon>Suregada</taxon>
    </lineage>
</organism>
<dbReference type="EC" id="3.2.2.22"/>
<dbReference type="PIR" id="S17574">
    <property type="entry name" value="S17574"/>
</dbReference>
<dbReference type="SMR" id="P24475"/>
<dbReference type="GO" id="GO:0030598">
    <property type="term" value="F:rRNA N-glycosylase activity"/>
    <property type="evidence" value="ECO:0007669"/>
    <property type="project" value="UniProtKB-EC"/>
</dbReference>
<dbReference type="GO" id="GO:0090729">
    <property type="term" value="F:toxin activity"/>
    <property type="evidence" value="ECO:0007669"/>
    <property type="project" value="UniProtKB-KW"/>
</dbReference>
<dbReference type="GO" id="GO:0051607">
    <property type="term" value="P:defense response to virus"/>
    <property type="evidence" value="ECO:0007669"/>
    <property type="project" value="UniProtKB-KW"/>
</dbReference>
<dbReference type="GO" id="GO:0017148">
    <property type="term" value="P:negative regulation of translation"/>
    <property type="evidence" value="ECO:0007669"/>
    <property type="project" value="UniProtKB-KW"/>
</dbReference>
<dbReference type="Gene3D" id="3.40.420.10">
    <property type="entry name" value="Ricin (A subunit), domain 1"/>
    <property type="match status" value="1"/>
</dbReference>
<dbReference type="InterPro" id="IPR036041">
    <property type="entry name" value="Ribosome-inact_prot_sf"/>
</dbReference>
<dbReference type="InterPro" id="IPR016138">
    <property type="entry name" value="Ribosome_inactivat_prot_sub1"/>
</dbReference>
<dbReference type="SUPFAM" id="SSF56371">
    <property type="entry name" value="Ribosome inactivating proteins (RIP)"/>
    <property type="match status" value="1"/>
</dbReference>
<reference key="1">
    <citation type="journal article" date="1991" name="FEBS Lett.">
        <title>A new class of anti-HIV agents: GAP31, DAPs 30 and 32.</title>
        <authorList>
            <person name="Lee-Huang S."/>
            <person name="Kung H.-F."/>
            <person name="Huang P.L."/>
            <person name="Huang P.L."/>
            <person name="Li B.-Q."/>
            <person name="Huang P."/>
            <person name="Huang H.I."/>
            <person name="Chen H.-C."/>
        </authorList>
    </citation>
    <scope>PROTEIN SEQUENCE</scope>
    <source>
        <tissue>Seed</tissue>
    </source>
</reference>
<keyword id="KW-0051">Antiviral defense</keyword>
<keyword id="KW-0903">Direct protein sequencing</keyword>
<keyword id="KW-0378">Hydrolase</keyword>
<keyword id="KW-0611">Plant defense</keyword>
<keyword id="KW-0652">Protein synthesis inhibitor</keyword>
<keyword id="KW-0800">Toxin</keyword>
<accession>P24475</accession>
<comment type="function">
    <text>Single-chain ribosome-inactivating protein, possessing high antiviral potency and low toxicity to normal cells in culture and to intact animals. Capable of inhibiting HIV-1 infection and replication.</text>
</comment>
<comment type="catalytic activity">
    <reaction>
        <text>Endohydrolysis of the N-glycosidic bond at one specific adenosine on the 28S rRNA.</text>
        <dbReference type="EC" id="3.2.2.22"/>
    </reaction>
</comment>
<comment type="similarity">
    <text evidence="2">Belongs to the ribosome-inactivating protein family. Type 1 RIP subfamily.</text>
</comment>